<keyword id="KW-0028">Amino-acid biosynthesis</keyword>
<keyword id="KW-0963">Cytoplasm</keyword>
<keyword id="KW-0220">Diaminopimelate biosynthesis</keyword>
<keyword id="KW-0457">Lysine biosynthesis</keyword>
<keyword id="KW-0520">NAD</keyword>
<keyword id="KW-0521">NADP</keyword>
<keyword id="KW-0560">Oxidoreductase</keyword>
<keyword id="KW-1185">Reference proteome</keyword>
<protein>
    <recommendedName>
        <fullName evidence="1">4-hydroxy-tetrahydrodipicolinate reductase</fullName>
        <shortName evidence="1">HTPA reductase</shortName>
        <ecNumber evidence="1">1.17.1.8</ecNumber>
    </recommendedName>
</protein>
<reference key="1">
    <citation type="journal article" date="2009" name="J. Bacteriol.">
        <title>Genome sequences of three Agrobacterium biovars help elucidate the evolution of multichromosome genomes in bacteria.</title>
        <authorList>
            <person name="Slater S.C."/>
            <person name="Goldman B.S."/>
            <person name="Goodner B."/>
            <person name="Setubal J.C."/>
            <person name="Farrand S.K."/>
            <person name="Nester E.W."/>
            <person name="Burr T.J."/>
            <person name="Banta L."/>
            <person name="Dickerman A.W."/>
            <person name="Paulsen I."/>
            <person name="Otten L."/>
            <person name="Suen G."/>
            <person name="Welch R."/>
            <person name="Almeida N.F."/>
            <person name="Arnold F."/>
            <person name="Burton O.T."/>
            <person name="Du Z."/>
            <person name="Ewing A."/>
            <person name="Godsy E."/>
            <person name="Heisel S."/>
            <person name="Houmiel K.L."/>
            <person name="Jhaveri J."/>
            <person name="Lu J."/>
            <person name="Miller N.M."/>
            <person name="Norton S."/>
            <person name="Chen Q."/>
            <person name="Phoolcharoen W."/>
            <person name="Ohlin V."/>
            <person name="Ondrusek D."/>
            <person name="Pride N."/>
            <person name="Stricklin S.L."/>
            <person name="Sun J."/>
            <person name="Wheeler C."/>
            <person name="Wilson L."/>
            <person name="Zhu H."/>
            <person name="Wood D.W."/>
        </authorList>
    </citation>
    <scope>NUCLEOTIDE SEQUENCE [LARGE SCALE GENOMIC DNA]</scope>
    <source>
        <strain>ATCC BAA-846 / DSM 112012 / S4</strain>
    </source>
</reference>
<dbReference type="EC" id="1.17.1.8" evidence="1"/>
<dbReference type="EMBL" id="CP000633">
    <property type="protein sequence ID" value="ACM35149.1"/>
    <property type="molecule type" value="Genomic_DNA"/>
</dbReference>
<dbReference type="RefSeq" id="WP_012654679.1">
    <property type="nucleotide sequence ID" value="NC_011989.1"/>
</dbReference>
<dbReference type="SMR" id="B9JYQ3"/>
<dbReference type="STRING" id="311402.Avi_0237"/>
<dbReference type="KEGG" id="avi:Avi_0237"/>
<dbReference type="eggNOG" id="COG0289">
    <property type="taxonomic scope" value="Bacteria"/>
</dbReference>
<dbReference type="HOGENOM" id="CLU_047479_2_1_5"/>
<dbReference type="UniPathway" id="UPA00034">
    <property type="reaction ID" value="UER00018"/>
</dbReference>
<dbReference type="Proteomes" id="UP000001596">
    <property type="component" value="Chromosome 1"/>
</dbReference>
<dbReference type="GO" id="GO:0005829">
    <property type="term" value="C:cytosol"/>
    <property type="evidence" value="ECO:0007669"/>
    <property type="project" value="TreeGrafter"/>
</dbReference>
<dbReference type="GO" id="GO:0008839">
    <property type="term" value="F:4-hydroxy-tetrahydrodipicolinate reductase"/>
    <property type="evidence" value="ECO:0007669"/>
    <property type="project" value="UniProtKB-EC"/>
</dbReference>
<dbReference type="GO" id="GO:0051287">
    <property type="term" value="F:NAD binding"/>
    <property type="evidence" value="ECO:0007669"/>
    <property type="project" value="UniProtKB-UniRule"/>
</dbReference>
<dbReference type="GO" id="GO:0050661">
    <property type="term" value="F:NADP binding"/>
    <property type="evidence" value="ECO:0007669"/>
    <property type="project" value="UniProtKB-UniRule"/>
</dbReference>
<dbReference type="GO" id="GO:0016726">
    <property type="term" value="F:oxidoreductase activity, acting on CH or CH2 groups, NAD or NADP as acceptor"/>
    <property type="evidence" value="ECO:0007669"/>
    <property type="project" value="UniProtKB-UniRule"/>
</dbReference>
<dbReference type="GO" id="GO:0019877">
    <property type="term" value="P:diaminopimelate biosynthetic process"/>
    <property type="evidence" value="ECO:0007669"/>
    <property type="project" value="UniProtKB-UniRule"/>
</dbReference>
<dbReference type="GO" id="GO:0009089">
    <property type="term" value="P:lysine biosynthetic process via diaminopimelate"/>
    <property type="evidence" value="ECO:0007669"/>
    <property type="project" value="UniProtKB-UniRule"/>
</dbReference>
<dbReference type="CDD" id="cd02274">
    <property type="entry name" value="DHDPR_N"/>
    <property type="match status" value="1"/>
</dbReference>
<dbReference type="FunFam" id="3.30.360.10:FF:000004">
    <property type="entry name" value="4-hydroxy-tetrahydrodipicolinate reductase"/>
    <property type="match status" value="1"/>
</dbReference>
<dbReference type="Gene3D" id="3.30.360.10">
    <property type="entry name" value="Dihydrodipicolinate Reductase, domain 2"/>
    <property type="match status" value="1"/>
</dbReference>
<dbReference type="Gene3D" id="3.40.50.720">
    <property type="entry name" value="NAD(P)-binding Rossmann-like Domain"/>
    <property type="match status" value="1"/>
</dbReference>
<dbReference type="HAMAP" id="MF_00102">
    <property type="entry name" value="DapB"/>
    <property type="match status" value="1"/>
</dbReference>
<dbReference type="InterPro" id="IPR022663">
    <property type="entry name" value="DapB_C"/>
</dbReference>
<dbReference type="InterPro" id="IPR000846">
    <property type="entry name" value="DapB_N"/>
</dbReference>
<dbReference type="InterPro" id="IPR022664">
    <property type="entry name" value="DapB_N_CS"/>
</dbReference>
<dbReference type="InterPro" id="IPR023940">
    <property type="entry name" value="DHDPR_bac"/>
</dbReference>
<dbReference type="InterPro" id="IPR036291">
    <property type="entry name" value="NAD(P)-bd_dom_sf"/>
</dbReference>
<dbReference type="NCBIfam" id="TIGR00036">
    <property type="entry name" value="dapB"/>
    <property type="match status" value="1"/>
</dbReference>
<dbReference type="PANTHER" id="PTHR20836:SF0">
    <property type="entry name" value="4-HYDROXY-TETRAHYDRODIPICOLINATE REDUCTASE 1, CHLOROPLASTIC-RELATED"/>
    <property type="match status" value="1"/>
</dbReference>
<dbReference type="PANTHER" id="PTHR20836">
    <property type="entry name" value="DIHYDRODIPICOLINATE REDUCTASE"/>
    <property type="match status" value="1"/>
</dbReference>
<dbReference type="Pfam" id="PF05173">
    <property type="entry name" value="DapB_C"/>
    <property type="match status" value="1"/>
</dbReference>
<dbReference type="Pfam" id="PF01113">
    <property type="entry name" value="DapB_N"/>
    <property type="match status" value="1"/>
</dbReference>
<dbReference type="PIRSF" id="PIRSF000161">
    <property type="entry name" value="DHPR"/>
    <property type="match status" value="1"/>
</dbReference>
<dbReference type="SUPFAM" id="SSF55347">
    <property type="entry name" value="Glyceraldehyde-3-phosphate dehydrogenase-like, C-terminal domain"/>
    <property type="match status" value="1"/>
</dbReference>
<dbReference type="SUPFAM" id="SSF51735">
    <property type="entry name" value="NAD(P)-binding Rossmann-fold domains"/>
    <property type="match status" value="1"/>
</dbReference>
<dbReference type="PROSITE" id="PS01298">
    <property type="entry name" value="DAPB"/>
    <property type="match status" value="1"/>
</dbReference>
<comment type="function">
    <text evidence="1">Catalyzes the conversion of 4-hydroxy-tetrahydrodipicolinate (HTPA) to tetrahydrodipicolinate.</text>
</comment>
<comment type="catalytic activity">
    <reaction evidence="1">
        <text>(S)-2,3,4,5-tetrahydrodipicolinate + NAD(+) + H2O = (2S,4S)-4-hydroxy-2,3,4,5-tetrahydrodipicolinate + NADH + H(+)</text>
        <dbReference type="Rhea" id="RHEA:35323"/>
        <dbReference type="ChEBI" id="CHEBI:15377"/>
        <dbReference type="ChEBI" id="CHEBI:15378"/>
        <dbReference type="ChEBI" id="CHEBI:16845"/>
        <dbReference type="ChEBI" id="CHEBI:57540"/>
        <dbReference type="ChEBI" id="CHEBI:57945"/>
        <dbReference type="ChEBI" id="CHEBI:67139"/>
        <dbReference type="EC" id="1.17.1.8"/>
    </reaction>
</comment>
<comment type="catalytic activity">
    <reaction evidence="1">
        <text>(S)-2,3,4,5-tetrahydrodipicolinate + NADP(+) + H2O = (2S,4S)-4-hydroxy-2,3,4,5-tetrahydrodipicolinate + NADPH + H(+)</text>
        <dbReference type="Rhea" id="RHEA:35331"/>
        <dbReference type="ChEBI" id="CHEBI:15377"/>
        <dbReference type="ChEBI" id="CHEBI:15378"/>
        <dbReference type="ChEBI" id="CHEBI:16845"/>
        <dbReference type="ChEBI" id="CHEBI:57783"/>
        <dbReference type="ChEBI" id="CHEBI:58349"/>
        <dbReference type="ChEBI" id="CHEBI:67139"/>
        <dbReference type="EC" id="1.17.1.8"/>
    </reaction>
</comment>
<comment type="pathway">
    <text evidence="1">Amino-acid biosynthesis; L-lysine biosynthesis via DAP pathway; (S)-tetrahydrodipicolinate from L-aspartate: step 4/4.</text>
</comment>
<comment type="subcellular location">
    <subcellularLocation>
        <location evidence="1">Cytoplasm</location>
    </subcellularLocation>
</comment>
<comment type="similarity">
    <text evidence="1">Belongs to the DapB family.</text>
</comment>
<comment type="caution">
    <text evidence="2">Was originally thought to be a dihydrodipicolinate reductase (DHDPR), catalyzing the conversion of dihydrodipicolinate to tetrahydrodipicolinate. However, it was shown in E.coli that the substrate of the enzymatic reaction is not dihydrodipicolinate (DHDP) but in fact (2S,4S)-4-hydroxy-2,3,4,5-tetrahydrodipicolinic acid (HTPA), the product released by the DapA-catalyzed reaction.</text>
</comment>
<feature type="chain" id="PRO_1000118837" description="4-hydroxy-tetrahydrodipicolinate reductase">
    <location>
        <begin position="1"/>
        <end position="270"/>
    </location>
</feature>
<feature type="active site" description="Proton donor/acceptor" evidence="1">
    <location>
        <position position="155"/>
    </location>
</feature>
<feature type="active site" description="Proton donor" evidence="1">
    <location>
        <position position="159"/>
    </location>
</feature>
<feature type="binding site" evidence="1">
    <location>
        <begin position="7"/>
        <end position="12"/>
    </location>
    <ligand>
        <name>NAD(+)</name>
        <dbReference type="ChEBI" id="CHEBI:57540"/>
    </ligand>
</feature>
<feature type="binding site" evidence="1">
    <location>
        <position position="34"/>
    </location>
    <ligand>
        <name>NADP(+)</name>
        <dbReference type="ChEBI" id="CHEBI:58349"/>
    </ligand>
</feature>
<feature type="binding site" evidence="1">
    <location>
        <begin position="97"/>
        <end position="99"/>
    </location>
    <ligand>
        <name>NAD(+)</name>
        <dbReference type="ChEBI" id="CHEBI:57540"/>
    </ligand>
</feature>
<feature type="binding site" evidence="1">
    <location>
        <begin position="121"/>
        <end position="124"/>
    </location>
    <ligand>
        <name>NAD(+)</name>
        <dbReference type="ChEBI" id="CHEBI:57540"/>
    </ligand>
</feature>
<feature type="binding site" evidence="1">
    <location>
        <position position="156"/>
    </location>
    <ligand>
        <name>(S)-2,3,4,5-tetrahydrodipicolinate</name>
        <dbReference type="ChEBI" id="CHEBI:16845"/>
    </ligand>
</feature>
<feature type="binding site" evidence="1">
    <location>
        <begin position="165"/>
        <end position="166"/>
    </location>
    <ligand>
        <name>(S)-2,3,4,5-tetrahydrodipicolinate</name>
        <dbReference type="ChEBI" id="CHEBI:16845"/>
    </ligand>
</feature>
<organism>
    <name type="scientific">Allorhizobium ampelinum (strain ATCC BAA-846 / DSM 112012 / S4)</name>
    <name type="common">Agrobacterium vitis (strain S4)</name>
    <dbReference type="NCBI Taxonomy" id="311402"/>
    <lineage>
        <taxon>Bacteria</taxon>
        <taxon>Pseudomonadati</taxon>
        <taxon>Pseudomonadota</taxon>
        <taxon>Alphaproteobacteria</taxon>
        <taxon>Hyphomicrobiales</taxon>
        <taxon>Rhizobiaceae</taxon>
        <taxon>Rhizobium/Agrobacterium group</taxon>
        <taxon>Allorhizobium</taxon>
        <taxon>Allorhizobium ampelinum</taxon>
    </lineage>
</organism>
<proteinExistence type="inferred from homology"/>
<evidence type="ECO:0000255" key="1">
    <source>
        <dbReference type="HAMAP-Rule" id="MF_00102"/>
    </source>
</evidence>
<evidence type="ECO:0000305" key="2"/>
<accession>B9JYQ3</accession>
<gene>
    <name evidence="1" type="primary">dapB</name>
    <name type="ordered locus">Avi_0237</name>
</gene>
<name>DAPB_ALLAM</name>
<sequence length="270" mass="27636">MKLVVVGVSGRMGQALVRIICETQGAVLHAAVGRPGSASIGRDAGDLAGVGPLGVPVTDDALAAFVNADGVIDFTRPETSVEFSALAAQARIVHIIGTTGCSPADEARFEAAARHARIVKSGNMSLGVNLLSVLVAQAAKALEASGWDIEVLEMHHKHKVDAPSGTALLLGEAAAKGRGIDLTEKAVKVRDGHTGPREPGSIGFATLRGGSVIGEHSVLLAGEGEIVTLSHSAGDRSIFARGAVKAALWAQDKKPGLYSMLDVLGLSSPH</sequence>